<geneLocation type="mitochondrion"/>
<keyword id="KW-0186">Copper</keyword>
<keyword id="KW-0249">Electron transport</keyword>
<keyword id="KW-0460">Magnesium</keyword>
<keyword id="KW-0472">Membrane</keyword>
<keyword id="KW-0479">Metal-binding</keyword>
<keyword id="KW-0496">Mitochondrion</keyword>
<keyword id="KW-0999">Mitochondrion inner membrane</keyword>
<keyword id="KW-0679">Respiratory chain</keyword>
<keyword id="KW-1278">Translocase</keyword>
<keyword id="KW-0812">Transmembrane</keyword>
<keyword id="KW-1133">Transmembrane helix</keyword>
<keyword id="KW-0813">Transport</keyword>
<sequence>MSTWANLGLQDSASPLMEQLIFFHDHALLILVMITVLVGYLMFMLFFNSYVNRFLLHGQLIEMIWTILPAIILLFIAMPSLRLLYLLDEINEPSITLKSIGHQWYWSYEYSDFNNVEFDSYMIPTNELSNDGFRLLDVDNRIVLPMNSQIRILVTAADVIHSWTVPALGVKVDGTPGRLNQTNFFINRPGLFYGQCSEICGANHSFMPIVIESVPVNYFIKWISSTVNS</sequence>
<dbReference type="EC" id="7.1.1.9"/>
<dbReference type="EMBL" id="M95142">
    <property type="protein sequence ID" value="AAA02772.2"/>
    <property type="molecule type" value="Genomic_DNA"/>
</dbReference>
<dbReference type="SMR" id="P29860"/>
<dbReference type="GO" id="GO:0005743">
    <property type="term" value="C:mitochondrial inner membrane"/>
    <property type="evidence" value="ECO:0007669"/>
    <property type="project" value="UniProtKB-SubCell"/>
</dbReference>
<dbReference type="GO" id="GO:0005507">
    <property type="term" value="F:copper ion binding"/>
    <property type="evidence" value="ECO:0007669"/>
    <property type="project" value="InterPro"/>
</dbReference>
<dbReference type="GO" id="GO:0004129">
    <property type="term" value="F:cytochrome-c oxidase activity"/>
    <property type="evidence" value="ECO:0007669"/>
    <property type="project" value="UniProtKB-EC"/>
</dbReference>
<dbReference type="GO" id="GO:0042773">
    <property type="term" value="P:ATP synthesis coupled electron transport"/>
    <property type="evidence" value="ECO:0007669"/>
    <property type="project" value="TreeGrafter"/>
</dbReference>
<dbReference type="CDD" id="cd13912">
    <property type="entry name" value="CcO_II_C"/>
    <property type="match status" value="1"/>
</dbReference>
<dbReference type="FunFam" id="1.10.287.90:FF:000006">
    <property type="entry name" value="Cytochrome c oxidase subunit 2"/>
    <property type="match status" value="1"/>
</dbReference>
<dbReference type="FunFam" id="2.60.40.420:FF:000001">
    <property type="entry name" value="Cytochrome c oxidase subunit 2"/>
    <property type="match status" value="1"/>
</dbReference>
<dbReference type="Gene3D" id="1.10.287.90">
    <property type="match status" value="1"/>
</dbReference>
<dbReference type="Gene3D" id="2.60.40.420">
    <property type="entry name" value="Cupredoxins - blue copper proteins"/>
    <property type="match status" value="1"/>
</dbReference>
<dbReference type="InterPro" id="IPR045187">
    <property type="entry name" value="CcO_II"/>
</dbReference>
<dbReference type="InterPro" id="IPR002429">
    <property type="entry name" value="CcO_II-like_C"/>
</dbReference>
<dbReference type="InterPro" id="IPR034210">
    <property type="entry name" value="CcO_II_C"/>
</dbReference>
<dbReference type="InterPro" id="IPR001505">
    <property type="entry name" value="Copper_CuA"/>
</dbReference>
<dbReference type="InterPro" id="IPR008972">
    <property type="entry name" value="Cupredoxin"/>
</dbReference>
<dbReference type="InterPro" id="IPR014222">
    <property type="entry name" value="Cyt_c_oxidase_su2"/>
</dbReference>
<dbReference type="InterPro" id="IPR011759">
    <property type="entry name" value="Cyt_c_oxidase_su2_TM_dom"/>
</dbReference>
<dbReference type="InterPro" id="IPR036257">
    <property type="entry name" value="Cyt_c_oxidase_su2_TM_sf"/>
</dbReference>
<dbReference type="NCBIfam" id="TIGR02866">
    <property type="entry name" value="CoxB"/>
    <property type="match status" value="1"/>
</dbReference>
<dbReference type="PANTHER" id="PTHR22888:SF9">
    <property type="entry name" value="CYTOCHROME C OXIDASE SUBUNIT 2"/>
    <property type="match status" value="1"/>
</dbReference>
<dbReference type="PANTHER" id="PTHR22888">
    <property type="entry name" value="CYTOCHROME C OXIDASE, SUBUNIT II"/>
    <property type="match status" value="1"/>
</dbReference>
<dbReference type="Pfam" id="PF00116">
    <property type="entry name" value="COX2"/>
    <property type="match status" value="1"/>
</dbReference>
<dbReference type="Pfam" id="PF02790">
    <property type="entry name" value="COX2_TM"/>
    <property type="match status" value="1"/>
</dbReference>
<dbReference type="PRINTS" id="PR01166">
    <property type="entry name" value="CYCOXIDASEII"/>
</dbReference>
<dbReference type="SUPFAM" id="SSF49503">
    <property type="entry name" value="Cupredoxins"/>
    <property type="match status" value="1"/>
</dbReference>
<dbReference type="SUPFAM" id="SSF81464">
    <property type="entry name" value="Cytochrome c oxidase subunit II-like, transmembrane region"/>
    <property type="match status" value="1"/>
</dbReference>
<dbReference type="PROSITE" id="PS00078">
    <property type="entry name" value="COX2"/>
    <property type="match status" value="1"/>
</dbReference>
<dbReference type="PROSITE" id="PS50857">
    <property type="entry name" value="COX2_CUA"/>
    <property type="match status" value="1"/>
</dbReference>
<dbReference type="PROSITE" id="PS50999">
    <property type="entry name" value="COX2_TM"/>
    <property type="match status" value="1"/>
</dbReference>
<feature type="chain" id="PRO_0000183578" description="Cytochrome c oxidase subunit 2">
    <location>
        <begin position="1"/>
        <end position="229"/>
    </location>
</feature>
<feature type="topological domain" description="Mitochondrial intermembrane" evidence="2">
    <location>
        <begin position="1"/>
        <end position="26"/>
    </location>
</feature>
<feature type="transmembrane region" description="Helical" evidence="2">
    <location>
        <begin position="27"/>
        <end position="48"/>
    </location>
</feature>
<feature type="topological domain" description="Mitochondrial matrix" evidence="2">
    <location>
        <begin position="49"/>
        <end position="62"/>
    </location>
</feature>
<feature type="transmembrane region" description="Helical" evidence="2">
    <location>
        <begin position="63"/>
        <end position="82"/>
    </location>
</feature>
<feature type="topological domain" description="Mitochondrial intermembrane" evidence="2">
    <location>
        <begin position="83"/>
        <end position="229"/>
    </location>
</feature>
<feature type="binding site" evidence="1">
    <location>
        <position position="161"/>
    </location>
    <ligand>
        <name>Cu cation</name>
        <dbReference type="ChEBI" id="CHEBI:23378"/>
        <label>A1</label>
    </ligand>
</feature>
<feature type="binding site" evidence="1">
    <location>
        <position position="196"/>
    </location>
    <ligand>
        <name>Cu cation</name>
        <dbReference type="ChEBI" id="CHEBI:23378"/>
        <label>A1</label>
    </ligand>
</feature>
<feature type="binding site" evidence="1">
    <location>
        <position position="196"/>
    </location>
    <ligand>
        <name>Cu cation</name>
        <dbReference type="ChEBI" id="CHEBI:23378"/>
        <label>A2</label>
    </ligand>
</feature>
<feature type="binding site" evidence="1">
    <location>
        <position position="198"/>
    </location>
    <ligand>
        <name>Cu cation</name>
        <dbReference type="ChEBI" id="CHEBI:23378"/>
        <label>A2</label>
    </ligand>
</feature>
<feature type="binding site" evidence="1">
    <location>
        <position position="198"/>
    </location>
    <ligand>
        <name>Mg(2+)</name>
        <dbReference type="ChEBI" id="CHEBI:18420"/>
        <note>ligand shared with subunit 1</note>
    </ligand>
</feature>
<feature type="binding site" evidence="1">
    <location>
        <position position="200"/>
    </location>
    <ligand>
        <name>Cu cation</name>
        <dbReference type="ChEBI" id="CHEBI:23378"/>
        <label>A1</label>
    </ligand>
</feature>
<feature type="binding site" evidence="1">
    <location>
        <position position="200"/>
    </location>
    <ligand>
        <name>Cu cation</name>
        <dbReference type="ChEBI" id="CHEBI:23378"/>
        <label>A2</label>
    </ligand>
</feature>
<feature type="binding site" evidence="1">
    <location>
        <position position="204"/>
    </location>
    <ligand>
        <name>Cu cation</name>
        <dbReference type="ChEBI" id="CHEBI:23378"/>
        <label>A2</label>
    </ligand>
</feature>
<feature type="binding site" evidence="1">
    <location>
        <position position="207"/>
    </location>
    <ligand>
        <name>Cu cation</name>
        <dbReference type="ChEBI" id="CHEBI:23378"/>
        <label>A1</label>
    </ligand>
</feature>
<name>COX2_DROLO</name>
<organism>
    <name type="scientific">Drosophila lowei</name>
    <name type="common">Fruit fly</name>
    <dbReference type="NCBI Taxonomy" id="7251"/>
    <lineage>
        <taxon>Eukaryota</taxon>
        <taxon>Metazoa</taxon>
        <taxon>Ecdysozoa</taxon>
        <taxon>Arthropoda</taxon>
        <taxon>Hexapoda</taxon>
        <taxon>Insecta</taxon>
        <taxon>Pterygota</taxon>
        <taxon>Neoptera</taxon>
        <taxon>Endopterygota</taxon>
        <taxon>Diptera</taxon>
        <taxon>Brachycera</taxon>
        <taxon>Muscomorpha</taxon>
        <taxon>Ephydroidea</taxon>
        <taxon>Drosophilidae</taxon>
        <taxon>Drosophila</taxon>
        <taxon>Sophophora</taxon>
    </lineage>
</organism>
<accession>P29860</accession>
<gene>
    <name type="primary">mt:CoII</name>
    <name type="synonym">CoII</name>
</gene>
<reference key="1">
    <citation type="journal article" date="1993" name="Mol. Biol. Evol.">
        <title>Relationships in the Drosophila obscura species group, inferred from mitochondrial cytochrome oxidase II sequences.</title>
        <authorList>
            <person name="Beckenbach A.T."/>
            <person name="Wei Y.W."/>
            <person name="Liu H."/>
        </authorList>
    </citation>
    <scope>NUCLEOTIDE SEQUENCE [GENOMIC DNA]</scope>
</reference>
<proteinExistence type="inferred from homology"/>
<evidence type="ECO:0000250" key="1">
    <source>
        <dbReference type="UniProtKB" id="P00410"/>
    </source>
</evidence>
<evidence type="ECO:0000255" key="2"/>
<evidence type="ECO:0000305" key="3"/>
<protein>
    <recommendedName>
        <fullName>Cytochrome c oxidase subunit 2</fullName>
        <ecNumber>7.1.1.9</ecNumber>
    </recommendedName>
    <alternativeName>
        <fullName>Cytochrome c oxidase polypeptide II</fullName>
    </alternativeName>
</protein>
<comment type="function">
    <text evidence="1">Component of the cytochrome c oxidase, the last enzyme in the mitochondrial electron transport chain which drives oxidative phosphorylation. The respiratory chain contains 3 multisubunit complexes succinate dehydrogenase (complex II, CII), ubiquinol-cytochrome c oxidoreductase (cytochrome b-c1 complex, complex III, CIII) and cytochrome c oxidase (complex IV, CIV), that cooperate to transfer electrons derived from NADH and succinate to molecular oxygen, creating an electrochemical gradient over the inner membrane that drives transmembrane transport and the ATP synthase. Cytochrome c oxidase is the component of the respiratory chain that catalyzes the reduction of oxygen to water. Electrons originating from reduced cytochrome c in the intermembrane space (IMS) are transferred via the dinuclear copper A center (CU(A)) of subunit 2 and heme A of subunit 1 to the active site in subunit 1, a binuclear center (BNC) formed by heme A3 and copper B (CU(B)). The BNC reduces molecular oxygen to 2 water molecules using 4 electrons from cytochrome c in the IMS and 4 protons from the mitochondrial matrix.</text>
</comment>
<comment type="catalytic activity">
    <reaction evidence="1">
        <text>4 Fe(II)-[cytochrome c] + O2 + 8 H(+)(in) = 4 Fe(III)-[cytochrome c] + 2 H2O + 4 H(+)(out)</text>
        <dbReference type="Rhea" id="RHEA:11436"/>
        <dbReference type="Rhea" id="RHEA-COMP:10350"/>
        <dbReference type="Rhea" id="RHEA-COMP:14399"/>
        <dbReference type="ChEBI" id="CHEBI:15377"/>
        <dbReference type="ChEBI" id="CHEBI:15378"/>
        <dbReference type="ChEBI" id="CHEBI:15379"/>
        <dbReference type="ChEBI" id="CHEBI:29033"/>
        <dbReference type="ChEBI" id="CHEBI:29034"/>
        <dbReference type="EC" id="7.1.1.9"/>
    </reaction>
    <physiologicalReaction direction="left-to-right" evidence="1">
        <dbReference type="Rhea" id="RHEA:11437"/>
    </physiologicalReaction>
</comment>
<comment type="cofactor">
    <cofactor evidence="1">
        <name>Cu cation</name>
        <dbReference type="ChEBI" id="CHEBI:23378"/>
    </cofactor>
    <text evidence="1">Binds a dinuclear copper A center per subunit.</text>
</comment>
<comment type="subunit">
    <text evidence="1">Component of the cytochrome c oxidase (complex IV, CIV), a multisubunit enzyme composed of a catalytic core of 3 subunits and several supernumerary subunits. The complex exists as a monomer or a dimer and forms supercomplexes (SCs) in the inner mitochondrial membrane with ubiquinol-cytochrome c oxidoreductase (cytochrome b-c1 complex, complex III, CIII).</text>
</comment>
<comment type="subcellular location">
    <subcellularLocation>
        <location evidence="1">Mitochondrion inner membrane</location>
        <topology evidence="1">Multi-pass membrane protein</topology>
    </subcellularLocation>
</comment>
<comment type="similarity">
    <text evidence="3">Belongs to the cytochrome c oxidase subunit 2 family.</text>
</comment>